<proteinExistence type="evidence at transcript level"/>
<sequence>MWNQKHDLESAQTPLYPMMSESPELRWSFIRKVYSIISIQLLVTIAVAATVVKVHSISVFFTTTTAGFALYILLILTPLIVMCPLYYYHQKHPVNYLLLGIFTVALAFAVGLTCAFTSGKVILESVILTAVVVISLTLYTFWAAKRGHDFNFLGPFLFGAVIVLMVFSFIQILFPLGKISVMIYGCLASIIFCGYIVYDTDNLIKRHSYDEYIWAAVSLYLDVINLFLSLLTLLRAVDS</sequence>
<gene>
    <name evidence="5" type="primary">LFG2</name>
    <name evidence="4" type="synonym">BIL4</name>
    <name evidence="7" type="ordered locus">At3g63310</name>
    <name evidence="8" type="ORF">MAA21.11</name>
</gene>
<reference key="1">
    <citation type="journal article" date="2000" name="Nature">
        <title>Sequence and analysis of chromosome 3 of the plant Arabidopsis thaliana.</title>
        <authorList>
            <person name="Salanoubat M."/>
            <person name="Lemcke K."/>
            <person name="Rieger M."/>
            <person name="Ansorge W."/>
            <person name="Unseld M."/>
            <person name="Fartmann B."/>
            <person name="Valle G."/>
            <person name="Bloecker H."/>
            <person name="Perez-Alonso M."/>
            <person name="Obermaier B."/>
            <person name="Delseny M."/>
            <person name="Boutry M."/>
            <person name="Grivell L.A."/>
            <person name="Mache R."/>
            <person name="Puigdomenech P."/>
            <person name="De Simone V."/>
            <person name="Choisne N."/>
            <person name="Artiguenave F."/>
            <person name="Robert C."/>
            <person name="Brottier P."/>
            <person name="Wincker P."/>
            <person name="Cattolico L."/>
            <person name="Weissenbach J."/>
            <person name="Saurin W."/>
            <person name="Quetier F."/>
            <person name="Schaefer M."/>
            <person name="Mueller-Auer S."/>
            <person name="Gabel C."/>
            <person name="Fuchs M."/>
            <person name="Benes V."/>
            <person name="Wurmbach E."/>
            <person name="Drzonek H."/>
            <person name="Erfle H."/>
            <person name="Jordan N."/>
            <person name="Bangert S."/>
            <person name="Wiedelmann R."/>
            <person name="Kranz H."/>
            <person name="Voss H."/>
            <person name="Holland R."/>
            <person name="Brandt P."/>
            <person name="Nyakatura G."/>
            <person name="Vezzi A."/>
            <person name="D'Angelo M."/>
            <person name="Pallavicini A."/>
            <person name="Toppo S."/>
            <person name="Simionati B."/>
            <person name="Conrad A."/>
            <person name="Hornischer K."/>
            <person name="Kauer G."/>
            <person name="Loehnert T.-H."/>
            <person name="Nordsiek G."/>
            <person name="Reichelt J."/>
            <person name="Scharfe M."/>
            <person name="Schoen O."/>
            <person name="Bargues M."/>
            <person name="Terol J."/>
            <person name="Climent J."/>
            <person name="Navarro P."/>
            <person name="Collado C."/>
            <person name="Perez-Perez A."/>
            <person name="Ottenwaelder B."/>
            <person name="Duchemin D."/>
            <person name="Cooke R."/>
            <person name="Laudie M."/>
            <person name="Berger-Llauro C."/>
            <person name="Purnelle B."/>
            <person name="Masuy D."/>
            <person name="de Haan M."/>
            <person name="Maarse A.C."/>
            <person name="Alcaraz J.-P."/>
            <person name="Cottet A."/>
            <person name="Casacuberta E."/>
            <person name="Monfort A."/>
            <person name="Argiriou A."/>
            <person name="Flores M."/>
            <person name="Liguori R."/>
            <person name="Vitale D."/>
            <person name="Mannhaupt G."/>
            <person name="Haase D."/>
            <person name="Schoof H."/>
            <person name="Rudd S."/>
            <person name="Zaccaria P."/>
            <person name="Mewes H.-W."/>
            <person name="Mayer K.F.X."/>
            <person name="Kaul S."/>
            <person name="Town C.D."/>
            <person name="Koo H.L."/>
            <person name="Tallon L.J."/>
            <person name="Jenkins J."/>
            <person name="Rooney T."/>
            <person name="Rizzo M."/>
            <person name="Walts A."/>
            <person name="Utterback T."/>
            <person name="Fujii C.Y."/>
            <person name="Shea T.P."/>
            <person name="Creasy T.H."/>
            <person name="Haas B."/>
            <person name="Maiti R."/>
            <person name="Wu D."/>
            <person name="Peterson J."/>
            <person name="Van Aken S."/>
            <person name="Pai G."/>
            <person name="Militscher J."/>
            <person name="Sellers P."/>
            <person name="Gill J.E."/>
            <person name="Feldblyum T.V."/>
            <person name="Preuss D."/>
            <person name="Lin X."/>
            <person name="Nierman W.C."/>
            <person name="Salzberg S.L."/>
            <person name="White O."/>
            <person name="Venter J.C."/>
            <person name="Fraser C.M."/>
            <person name="Kaneko T."/>
            <person name="Nakamura Y."/>
            <person name="Sato S."/>
            <person name="Kato T."/>
            <person name="Asamizu E."/>
            <person name="Sasamoto S."/>
            <person name="Kimura T."/>
            <person name="Idesawa K."/>
            <person name="Kawashima K."/>
            <person name="Kishida Y."/>
            <person name="Kiyokawa C."/>
            <person name="Kohara M."/>
            <person name="Matsumoto M."/>
            <person name="Matsuno A."/>
            <person name="Muraki A."/>
            <person name="Nakayama S."/>
            <person name="Nakazaki N."/>
            <person name="Shinpo S."/>
            <person name="Takeuchi C."/>
            <person name="Wada T."/>
            <person name="Watanabe A."/>
            <person name="Yamada M."/>
            <person name="Yasuda M."/>
            <person name="Tabata S."/>
        </authorList>
    </citation>
    <scope>NUCLEOTIDE SEQUENCE [LARGE SCALE GENOMIC DNA]</scope>
    <source>
        <strain>cv. Columbia</strain>
    </source>
</reference>
<reference key="2">
    <citation type="journal article" date="2017" name="Plant J.">
        <title>Araport11: a complete reannotation of the Arabidopsis thaliana reference genome.</title>
        <authorList>
            <person name="Cheng C.Y."/>
            <person name="Krishnakumar V."/>
            <person name="Chan A.P."/>
            <person name="Thibaud-Nissen F."/>
            <person name="Schobel S."/>
            <person name="Town C.D."/>
        </authorList>
    </citation>
    <scope>GENOME REANNOTATION</scope>
    <source>
        <strain>cv. Columbia</strain>
    </source>
</reference>
<reference key="3">
    <citation type="submission" date="2005-03" db="EMBL/GenBank/DDBJ databases">
        <title>Arabidopsis ORF clones.</title>
        <authorList>
            <person name="Kim C.J."/>
            <person name="Chen H."/>
            <person name="Cheuk R.F."/>
            <person name="Shinn P."/>
            <person name="Ecker J.R."/>
        </authorList>
    </citation>
    <scope>NUCLEOTIDE SEQUENCE [LARGE SCALE MRNA]</scope>
    <source>
        <strain>cv. Columbia</strain>
    </source>
</reference>
<reference key="4">
    <citation type="journal article" date="2006" name="Genome Biol.">
        <title>Mining the Arabidopsis thaliana genome for highly-divergent seven transmembrane receptors.</title>
        <authorList>
            <person name="Moriyama E.N."/>
            <person name="Strope P.K."/>
            <person name="Opiyo S.O."/>
            <person name="Chen Z."/>
            <person name="Jones A.M."/>
        </authorList>
    </citation>
    <scope>GENE FAMILY</scope>
</reference>
<reference key="5">
    <citation type="journal article" date="2009" name="Biosci. Biotechnol. Biochem.">
        <title>Chemical genetics reveal the novel transmembrane protein BIL4, which mediates plant cell elongation in brassinosteroid signaling.</title>
        <authorList>
            <person name="Yamagami A."/>
            <person name="Nakazawa M."/>
            <person name="Matsui M."/>
            <person name="Tujimoto M."/>
            <person name="Sakuta M."/>
            <person name="Asami T."/>
            <person name="Nakano T."/>
        </authorList>
    </citation>
    <scope>FUNCTION</scope>
    <scope>REGULATION BY BRZ</scope>
    <scope>TISSUE SPECIFICITY</scope>
    <scope>GENE FAMILY</scope>
    <source>
        <strain>cv. Columbia</strain>
    </source>
</reference>
<reference key="6">
    <citation type="journal article" date="2013" name="J. Exp. Bot.">
        <title>LIFEGUARD proteins support plant colonization by biotrophic powdery mildew fungi.</title>
        <authorList>
            <person name="Weis C."/>
            <person name="Hueckelhoven R."/>
            <person name="Eichmann R."/>
        </authorList>
    </citation>
    <scope>FUNCTION (MICROBIAL INFECTION)</scope>
    <scope>DISRUPTION PHENOTYPE</scope>
    <scope>TISSUE SPECIFICITY</scope>
    <scope>GENE FAMILY</scope>
    <scope>NOMENCLATURE</scope>
    <source>
        <strain>cv. Columbia</strain>
    </source>
</reference>
<comment type="function">
    <text evidence="2">Regulates the brassinosteroid (BR) signaling pathway that mediates cell elongation and organ morphogenesis (PubMed:19202280).</text>
</comment>
<comment type="function">
    <text evidence="3">(Microbial infection) Facilitates the development of the powdery mildew fungus E.cruciferarum.</text>
</comment>
<comment type="function">
    <text evidence="3">(Microbial infection) May prevent cell death upon A.alternata f.sp. lycopersici (AAL) toxin treatment.</text>
</comment>
<comment type="subcellular location">
    <subcellularLocation>
        <location evidence="1">Membrane</location>
        <topology evidence="1">Multi-pass membrane protein</topology>
    </subcellularLocation>
</comment>
<comment type="tissue specificity">
    <text evidence="2 3">Expressed in seedlings, roots, leaves, inflorescences and flowers.</text>
</comment>
<comment type="induction">
    <text evidence="2">Repressed by Brz, a triazole compound that acts as a brassinosteroid (BR)-specific inhibitor.</text>
</comment>
<comment type="disruption phenotype">
    <text evidence="3">Delayed development of the powdery mildew fungus E.cruciferarum. Increased cell death upon A.alternata f.sp. lycopersici (AAL) toxin treatment.</text>
</comment>
<comment type="similarity">
    <text evidence="6">Belongs to the BI1 family.</text>
</comment>
<protein>
    <recommendedName>
        <fullName evidence="5">Protein LIFEGUARD 2</fullName>
        <shortName evidence="5">AtLFG2</shortName>
    </recommendedName>
    <alternativeName>
        <fullName evidence="4">Protein BRZ-INSENSITIVE-LONG HYPOCOTYLS 4</fullName>
    </alternativeName>
</protein>
<keyword id="KW-1070">Brassinosteroid signaling pathway</keyword>
<keyword id="KW-0217">Developmental protein</keyword>
<keyword id="KW-0472">Membrane</keyword>
<keyword id="KW-0611">Plant defense</keyword>
<keyword id="KW-1185">Reference proteome</keyword>
<keyword id="KW-0812">Transmembrane</keyword>
<keyword id="KW-1133">Transmembrane helix</keyword>
<dbReference type="EMBL" id="AL138648">
    <property type="protein sequence ID" value="CAB86432.1"/>
    <property type="molecule type" value="Genomic_DNA"/>
</dbReference>
<dbReference type="EMBL" id="CP002686">
    <property type="protein sequence ID" value="AEE80466.1"/>
    <property type="molecule type" value="Genomic_DNA"/>
</dbReference>
<dbReference type="EMBL" id="BT020236">
    <property type="protein sequence ID" value="AAV74230.1"/>
    <property type="molecule type" value="mRNA"/>
</dbReference>
<dbReference type="EMBL" id="BT021132">
    <property type="protein sequence ID" value="AAX22267.1"/>
    <property type="molecule type" value="mRNA"/>
</dbReference>
<dbReference type="PIR" id="T48120">
    <property type="entry name" value="T48120"/>
</dbReference>
<dbReference type="RefSeq" id="NP_191890.1">
    <property type="nucleotide sequence ID" value="NM_116196.3"/>
</dbReference>
<dbReference type="SMR" id="Q9M1V9"/>
<dbReference type="FunCoup" id="Q9M1V9">
    <property type="interactions" value="3749"/>
</dbReference>
<dbReference type="IntAct" id="Q9M1V9">
    <property type="interactions" value="19"/>
</dbReference>
<dbReference type="STRING" id="3702.Q9M1V9"/>
<dbReference type="TCDB" id="1.A.14.3.13">
    <property type="family name" value="the calcium transporter a (cata) family (formerly the testis-enhanced gene transfer (tegt) family)"/>
</dbReference>
<dbReference type="iPTMnet" id="Q9M1V9"/>
<dbReference type="PaxDb" id="3702-AT3G63310.1"/>
<dbReference type="ProteomicsDB" id="238456"/>
<dbReference type="EnsemblPlants" id="AT3G63310.1">
    <property type="protein sequence ID" value="AT3G63310.1"/>
    <property type="gene ID" value="AT3G63310"/>
</dbReference>
<dbReference type="GeneID" id="825506"/>
<dbReference type="Gramene" id="AT3G63310.1">
    <property type="protein sequence ID" value="AT3G63310.1"/>
    <property type="gene ID" value="AT3G63310"/>
</dbReference>
<dbReference type="KEGG" id="ath:AT3G63310"/>
<dbReference type="Araport" id="AT3G63310"/>
<dbReference type="TAIR" id="AT3G63310">
    <property type="gene designation" value="BIL4"/>
</dbReference>
<dbReference type="eggNOG" id="KOG2322">
    <property type="taxonomic scope" value="Eukaryota"/>
</dbReference>
<dbReference type="HOGENOM" id="CLU_058671_0_1_1"/>
<dbReference type="InParanoid" id="Q9M1V9"/>
<dbReference type="OMA" id="SIRMGKF"/>
<dbReference type="PhylomeDB" id="Q9M1V9"/>
<dbReference type="PRO" id="PR:Q9M1V9"/>
<dbReference type="Proteomes" id="UP000006548">
    <property type="component" value="Chromosome 3"/>
</dbReference>
<dbReference type="ExpressionAtlas" id="Q9M1V9">
    <property type="expression patterns" value="baseline and differential"/>
</dbReference>
<dbReference type="GO" id="GO:0016020">
    <property type="term" value="C:membrane"/>
    <property type="evidence" value="ECO:0007669"/>
    <property type="project" value="UniProtKB-SubCell"/>
</dbReference>
<dbReference type="GO" id="GO:0009742">
    <property type="term" value="P:brassinosteroid mediated signaling pathway"/>
    <property type="evidence" value="ECO:0000315"/>
    <property type="project" value="TAIR"/>
</dbReference>
<dbReference type="GO" id="GO:0006952">
    <property type="term" value="P:defense response"/>
    <property type="evidence" value="ECO:0007669"/>
    <property type="project" value="UniProtKB-KW"/>
</dbReference>
<dbReference type="GO" id="GO:1905421">
    <property type="term" value="P:regulation of plant organ morphogenesis"/>
    <property type="evidence" value="ECO:0000315"/>
    <property type="project" value="UniProtKB"/>
</dbReference>
<dbReference type="GO" id="GO:0009826">
    <property type="term" value="P:unidimensional cell growth"/>
    <property type="evidence" value="ECO:0000315"/>
    <property type="project" value="TAIR"/>
</dbReference>
<dbReference type="InterPro" id="IPR006214">
    <property type="entry name" value="Bax_inhibitor_1-related"/>
</dbReference>
<dbReference type="PANTHER" id="PTHR23291">
    <property type="entry name" value="BAX INHIBITOR-RELATED"/>
    <property type="match status" value="1"/>
</dbReference>
<dbReference type="PANTHER" id="PTHR23291:SF107">
    <property type="entry name" value="PROTEIN LIFEGUARD 2"/>
    <property type="match status" value="1"/>
</dbReference>
<dbReference type="Pfam" id="PF01027">
    <property type="entry name" value="Bax1-I"/>
    <property type="match status" value="1"/>
</dbReference>
<accession>Q9M1V9</accession>
<evidence type="ECO:0000255" key="1"/>
<evidence type="ECO:0000269" key="2">
    <source>
    </source>
</evidence>
<evidence type="ECO:0000269" key="3">
    <source>
    </source>
</evidence>
<evidence type="ECO:0000303" key="4">
    <source>
    </source>
</evidence>
<evidence type="ECO:0000303" key="5">
    <source>
    </source>
</evidence>
<evidence type="ECO:0000305" key="6"/>
<evidence type="ECO:0000312" key="7">
    <source>
        <dbReference type="Araport" id="AT3G63310"/>
    </source>
</evidence>
<evidence type="ECO:0000312" key="8">
    <source>
        <dbReference type="EMBL" id="CAB86432.1"/>
    </source>
</evidence>
<organism>
    <name type="scientific">Arabidopsis thaliana</name>
    <name type="common">Mouse-ear cress</name>
    <dbReference type="NCBI Taxonomy" id="3702"/>
    <lineage>
        <taxon>Eukaryota</taxon>
        <taxon>Viridiplantae</taxon>
        <taxon>Streptophyta</taxon>
        <taxon>Embryophyta</taxon>
        <taxon>Tracheophyta</taxon>
        <taxon>Spermatophyta</taxon>
        <taxon>Magnoliopsida</taxon>
        <taxon>eudicotyledons</taxon>
        <taxon>Gunneridae</taxon>
        <taxon>Pentapetalae</taxon>
        <taxon>rosids</taxon>
        <taxon>malvids</taxon>
        <taxon>Brassicales</taxon>
        <taxon>Brassicaceae</taxon>
        <taxon>Camelineae</taxon>
        <taxon>Arabidopsis</taxon>
    </lineage>
</organism>
<name>LFG2_ARATH</name>
<feature type="chain" id="PRO_0000441630" description="Protein LIFEGUARD 2">
    <location>
        <begin position="1"/>
        <end position="239"/>
    </location>
</feature>
<feature type="transmembrane region" description="Helical" evidence="1">
    <location>
        <begin position="41"/>
        <end position="61"/>
    </location>
</feature>
<feature type="transmembrane region" description="Helical" evidence="1">
    <location>
        <begin position="66"/>
        <end position="86"/>
    </location>
</feature>
<feature type="transmembrane region" description="Helical" evidence="1">
    <location>
        <begin position="96"/>
        <end position="116"/>
    </location>
</feature>
<feature type="transmembrane region" description="Helical" evidence="1">
    <location>
        <begin position="121"/>
        <end position="141"/>
    </location>
</feature>
<feature type="transmembrane region" description="Helical" evidence="1">
    <location>
        <begin position="156"/>
        <end position="176"/>
    </location>
</feature>
<feature type="transmembrane region" description="Helical" evidence="1">
    <location>
        <begin position="179"/>
        <end position="199"/>
    </location>
</feature>
<feature type="transmembrane region" description="Helical" evidence="1">
    <location>
        <begin position="213"/>
        <end position="233"/>
    </location>
</feature>